<organism>
    <name type="scientific">Mycobacterium tuberculosis (strain ATCC 25177 / H37Ra)</name>
    <dbReference type="NCBI Taxonomy" id="419947"/>
    <lineage>
        <taxon>Bacteria</taxon>
        <taxon>Bacillati</taxon>
        <taxon>Actinomycetota</taxon>
        <taxon>Actinomycetes</taxon>
        <taxon>Mycobacteriales</taxon>
        <taxon>Mycobacteriaceae</taxon>
        <taxon>Mycobacterium</taxon>
        <taxon>Mycobacterium tuberculosis complex</taxon>
    </lineage>
</organism>
<evidence type="ECO:0000255" key="1">
    <source>
        <dbReference type="HAMAP-Rule" id="MF_00093"/>
    </source>
</evidence>
<proteinExistence type="inferred from homology"/>
<feature type="chain" id="PRO_1000004917" description="Peptide chain release factor 1">
    <location>
        <begin position="1"/>
        <end position="357"/>
    </location>
</feature>
<feature type="modified residue" description="N5-methylglutamine" evidence="1">
    <location>
        <position position="236"/>
    </location>
</feature>
<name>RF1_MYCTA</name>
<reference key="1">
    <citation type="journal article" date="2008" name="PLoS ONE">
        <title>Genetic basis of virulence attenuation revealed by comparative genomic analysis of Mycobacterium tuberculosis strain H37Ra versus H37Rv.</title>
        <authorList>
            <person name="Zheng H."/>
            <person name="Lu L."/>
            <person name="Wang B."/>
            <person name="Pu S."/>
            <person name="Zhang X."/>
            <person name="Zhu G."/>
            <person name="Shi W."/>
            <person name="Zhang L."/>
            <person name="Wang H."/>
            <person name="Wang S."/>
            <person name="Zhao G."/>
            <person name="Zhang Y."/>
        </authorList>
    </citation>
    <scope>NUCLEOTIDE SEQUENCE [LARGE SCALE GENOMIC DNA]</scope>
    <source>
        <strain>ATCC 25177 / H37Ra</strain>
    </source>
</reference>
<sequence>MTQPVQTIDVLLAEHAELELALADPALHSNPAEARRVGRRFARLAPIVATHRKLTSARDDLETARELVASDESFAAEVAALEARVGELDAQLTDMLAPRDPHDADDIVLEVKSGEGGEESALFAADLARMYIRYAERHGWAVTVLDETTSDLGGYKDATLAIASKADTPDGVWSRMKFEGGVHRVQRVPVTESQGRVHTSAAGVLVYPEPEEVGQVQIDESDLRIDVFRSSGKGGQGVNTTDSAVRITHLPTGIVVTCQNERSQLQNKTRALQVLAARLQAMAEEQALADASADRASQIRTVDRSERIRTYNFPENRITDHRIGYKSHNLDQVLDGDLDALFDALSAADKQSRLRQS</sequence>
<gene>
    <name evidence="1" type="primary">prfA</name>
    <name type="ordered locus">MRA_1307</name>
</gene>
<keyword id="KW-0963">Cytoplasm</keyword>
<keyword id="KW-0488">Methylation</keyword>
<keyword id="KW-0648">Protein biosynthesis</keyword>
<keyword id="KW-1185">Reference proteome</keyword>
<comment type="function">
    <text evidence="1">Peptide chain release factor 1 directs the termination of translation in response to the peptide chain termination codons UAG and UAA.</text>
</comment>
<comment type="subcellular location">
    <subcellularLocation>
        <location evidence="1">Cytoplasm</location>
    </subcellularLocation>
</comment>
<comment type="PTM">
    <text evidence="1">Methylated by PrmC. Methylation increases the termination efficiency of RF1.</text>
</comment>
<comment type="similarity">
    <text evidence="1">Belongs to the prokaryotic/mitochondrial release factor family.</text>
</comment>
<dbReference type="EMBL" id="CP000611">
    <property type="protein sequence ID" value="ABQ73048.1"/>
    <property type="molecule type" value="Genomic_DNA"/>
</dbReference>
<dbReference type="RefSeq" id="WP_003406670.1">
    <property type="nucleotide sequence ID" value="NZ_CP016972.1"/>
</dbReference>
<dbReference type="SMR" id="A5U1Z8"/>
<dbReference type="GeneID" id="45425273"/>
<dbReference type="KEGG" id="mra:MRA_1307"/>
<dbReference type="eggNOG" id="COG0216">
    <property type="taxonomic scope" value="Bacteria"/>
</dbReference>
<dbReference type="HOGENOM" id="CLU_036856_0_1_11"/>
<dbReference type="Proteomes" id="UP000001988">
    <property type="component" value="Chromosome"/>
</dbReference>
<dbReference type="GO" id="GO:0005737">
    <property type="term" value="C:cytoplasm"/>
    <property type="evidence" value="ECO:0007669"/>
    <property type="project" value="UniProtKB-SubCell"/>
</dbReference>
<dbReference type="GO" id="GO:0016149">
    <property type="term" value="F:translation release factor activity, codon specific"/>
    <property type="evidence" value="ECO:0007669"/>
    <property type="project" value="UniProtKB-UniRule"/>
</dbReference>
<dbReference type="FunFam" id="3.30.160.20:FF:000004">
    <property type="entry name" value="Peptide chain release factor 1"/>
    <property type="match status" value="1"/>
</dbReference>
<dbReference type="Gene3D" id="3.30.160.20">
    <property type="match status" value="1"/>
</dbReference>
<dbReference type="Gene3D" id="3.30.70.1660">
    <property type="match status" value="1"/>
</dbReference>
<dbReference type="Gene3D" id="6.10.140.1950">
    <property type="match status" value="1"/>
</dbReference>
<dbReference type="HAMAP" id="MF_00093">
    <property type="entry name" value="Rel_fac_1"/>
    <property type="match status" value="1"/>
</dbReference>
<dbReference type="InterPro" id="IPR005139">
    <property type="entry name" value="PCRF"/>
</dbReference>
<dbReference type="InterPro" id="IPR000352">
    <property type="entry name" value="Pep_chain_release_fac_I"/>
</dbReference>
<dbReference type="InterPro" id="IPR045853">
    <property type="entry name" value="Pep_chain_release_fac_I_sf"/>
</dbReference>
<dbReference type="InterPro" id="IPR050057">
    <property type="entry name" value="Prokaryotic/Mito_RF"/>
</dbReference>
<dbReference type="InterPro" id="IPR004373">
    <property type="entry name" value="RF-1"/>
</dbReference>
<dbReference type="NCBIfam" id="TIGR00019">
    <property type="entry name" value="prfA"/>
    <property type="match status" value="1"/>
</dbReference>
<dbReference type="NCBIfam" id="NF001859">
    <property type="entry name" value="PRK00591.1"/>
    <property type="match status" value="1"/>
</dbReference>
<dbReference type="PANTHER" id="PTHR43804">
    <property type="entry name" value="LD18447P"/>
    <property type="match status" value="1"/>
</dbReference>
<dbReference type="PANTHER" id="PTHR43804:SF7">
    <property type="entry name" value="LD18447P"/>
    <property type="match status" value="1"/>
</dbReference>
<dbReference type="Pfam" id="PF03462">
    <property type="entry name" value="PCRF"/>
    <property type="match status" value="1"/>
</dbReference>
<dbReference type="Pfam" id="PF00472">
    <property type="entry name" value="RF-1"/>
    <property type="match status" value="1"/>
</dbReference>
<dbReference type="SMART" id="SM00937">
    <property type="entry name" value="PCRF"/>
    <property type="match status" value="1"/>
</dbReference>
<dbReference type="SUPFAM" id="SSF75620">
    <property type="entry name" value="Release factor"/>
    <property type="match status" value="1"/>
</dbReference>
<dbReference type="PROSITE" id="PS00745">
    <property type="entry name" value="RF_PROK_I"/>
    <property type="match status" value="1"/>
</dbReference>
<accession>A5U1Z8</accession>
<protein>
    <recommendedName>
        <fullName evidence="1">Peptide chain release factor 1</fullName>
        <shortName evidence="1">RF-1</shortName>
    </recommendedName>
</protein>